<proteinExistence type="inferred from homology"/>
<organism>
    <name type="scientific">Psychromonas ingrahamii (strain DSM 17664 / CCUG 51855 / 37)</name>
    <dbReference type="NCBI Taxonomy" id="357804"/>
    <lineage>
        <taxon>Bacteria</taxon>
        <taxon>Pseudomonadati</taxon>
        <taxon>Pseudomonadota</taxon>
        <taxon>Gammaproteobacteria</taxon>
        <taxon>Alteromonadales</taxon>
        <taxon>Psychromonadaceae</taxon>
        <taxon>Psychromonas</taxon>
    </lineage>
</organism>
<keyword id="KW-0963">Cytoplasm</keyword>
<keyword id="KW-0489">Methyltransferase</keyword>
<keyword id="KW-1185">Reference proteome</keyword>
<keyword id="KW-0698">rRNA processing</keyword>
<keyword id="KW-0949">S-adenosyl-L-methionine</keyword>
<keyword id="KW-0808">Transferase</keyword>
<accession>A1SZ19</accession>
<comment type="function">
    <text evidence="1">Specifically methylates the guanine in position 1207 of 16S rRNA in the 30S particle.</text>
</comment>
<comment type="catalytic activity">
    <reaction evidence="1">
        <text>guanosine(1207) in 16S rRNA + S-adenosyl-L-methionine = N(2)-methylguanosine(1207) in 16S rRNA + S-adenosyl-L-homocysteine + H(+)</text>
        <dbReference type="Rhea" id="RHEA:42736"/>
        <dbReference type="Rhea" id="RHEA-COMP:10213"/>
        <dbReference type="Rhea" id="RHEA-COMP:10214"/>
        <dbReference type="ChEBI" id="CHEBI:15378"/>
        <dbReference type="ChEBI" id="CHEBI:57856"/>
        <dbReference type="ChEBI" id="CHEBI:59789"/>
        <dbReference type="ChEBI" id="CHEBI:74269"/>
        <dbReference type="ChEBI" id="CHEBI:74481"/>
        <dbReference type="EC" id="2.1.1.172"/>
    </reaction>
</comment>
<comment type="subunit">
    <text evidence="1">Monomer.</text>
</comment>
<comment type="subcellular location">
    <subcellularLocation>
        <location evidence="1">Cytoplasm</location>
    </subcellularLocation>
</comment>
<comment type="similarity">
    <text evidence="1">Belongs to the methyltransferase superfamily. RsmC family.</text>
</comment>
<sequence>MSLANHTFSNPSRVLQRNESLFTNKNILVAGNIDDEYPLQLQALANSSTFCFSDYRYYSVLKDKLTTSEVHFTDNYQGETKFDLLLIFLPKAKQETLYLLANLTPHLQPGASIILVGEKKCGIKSADSLLASYSNRINMIDSARHCSILHAELNQPVNAFTQSQWIKTYPLNINNTELQICSLPGVFSYGELDKGSELLLQNLPDKMSGRVLDFGCGAGVIACYVLKKHPQLSVDLVDINAFALASAKLSLQSNQLEGNVFPSNVFSDIKEKYNILLSNPPFHSGKNTDYTAAETFINQSTNHLKSKGKLSIVANRFLNYEGLLFKAFSNVKIDQESNKFKVLSCITKT</sequence>
<protein>
    <recommendedName>
        <fullName evidence="1">Ribosomal RNA small subunit methyltransferase C</fullName>
        <ecNumber evidence="1">2.1.1.172</ecNumber>
    </recommendedName>
    <alternativeName>
        <fullName evidence="1">16S rRNA m2G1207 methyltransferase</fullName>
    </alternativeName>
    <alternativeName>
        <fullName evidence="1">rRNA (guanine-N(2)-)-methyltransferase RsmC</fullName>
    </alternativeName>
</protein>
<reference key="1">
    <citation type="journal article" date="2008" name="BMC Genomics">
        <title>Genomics of an extreme psychrophile, Psychromonas ingrahamii.</title>
        <authorList>
            <person name="Riley M."/>
            <person name="Staley J.T."/>
            <person name="Danchin A."/>
            <person name="Wang T.Z."/>
            <person name="Brettin T.S."/>
            <person name="Hauser L.J."/>
            <person name="Land M.L."/>
            <person name="Thompson L.S."/>
        </authorList>
    </citation>
    <scope>NUCLEOTIDE SEQUENCE [LARGE SCALE GENOMIC DNA]</scope>
    <source>
        <strain>DSM 17664 / CCUG 51855 / 37</strain>
    </source>
</reference>
<dbReference type="EC" id="2.1.1.172" evidence="1"/>
<dbReference type="EMBL" id="CP000510">
    <property type="protein sequence ID" value="ABM04734.1"/>
    <property type="molecule type" value="Genomic_DNA"/>
</dbReference>
<dbReference type="RefSeq" id="WP_011771288.1">
    <property type="nucleotide sequence ID" value="NC_008709.1"/>
</dbReference>
<dbReference type="SMR" id="A1SZ19"/>
<dbReference type="STRING" id="357804.Ping_3032"/>
<dbReference type="KEGG" id="pin:Ping_3032"/>
<dbReference type="eggNOG" id="COG2813">
    <property type="taxonomic scope" value="Bacteria"/>
</dbReference>
<dbReference type="HOGENOM" id="CLU_049581_0_0_6"/>
<dbReference type="OrthoDB" id="9816072at2"/>
<dbReference type="Proteomes" id="UP000000639">
    <property type="component" value="Chromosome"/>
</dbReference>
<dbReference type="GO" id="GO:0005737">
    <property type="term" value="C:cytoplasm"/>
    <property type="evidence" value="ECO:0007669"/>
    <property type="project" value="UniProtKB-SubCell"/>
</dbReference>
<dbReference type="GO" id="GO:0052914">
    <property type="term" value="F:16S rRNA (guanine(1207)-N(2))-methyltransferase activity"/>
    <property type="evidence" value="ECO:0007669"/>
    <property type="project" value="UniProtKB-EC"/>
</dbReference>
<dbReference type="GO" id="GO:0003676">
    <property type="term" value="F:nucleic acid binding"/>
    <property type="evidence" value="ECO:0007669"/>
    <property type="project" value="InterPro"/>
</dbReference>
<dbReference type="CDD" id="cd02440">
    <property type="entry name" value="AdoMet_MTases"/>
    <property type="match status" value="1"/>
</dbReference>
<dbReference type="Gene3D" id="3.40.50.150">
    <property type="entry name" value="Vaccinia Virus protein VP39"/>
    <property type="match status" value="2"/>
</dbReference>
<dbReference type="HAMAP" id="MF_01862">
    <property type="entry name" value="16SrRNA_methyltr_C"/>
    <property type="match status" value="1"/>
</dbReference>
<dbReference type="InterPro" id="IPR002052">
    <property type="entry name" value="DNA_methylase_N6_adenine_CS"/>
</dbReference>
<dbReference type="InterPro" id="IPR013675">
    <property type="entry name" value="Mtase_sm_N"/>
</dbReference>
<dbReference type="InterPro" id="IPR023543">
    <property type="entry name" value="rRNA_ssu_MeTfrase_C"/>
</dbReference>
<dbReference type="InterPro" id="IPR046977">
    <property type="entry name" value="RsmC/RlmG"/>
</dbReference>
<dbReference type="InterPro" id="IPR029063">
    <property type="entry name" value="SAM-dependent_MTases_sf"/>
</dbReference>
<dbReference type="InterPro" id="IPR007848">
    <property type="entry name" value="Small_mtfrase_dom"/>
</dbReference>
<dbReference type="NCBIfam" id="NF007023">
    <property type="entry name" value="PRK09489.1"/>
    <property type="match status" value="1"/>
</dbReference>
<dbReference type="PANTHER" id="PTHR47816">
    <property type="entry name" value="RIBOSOMAL RNA SMALL SUBUNIT METHYLTRANSFERASE C"/>
    <property type="match status" value="1"/>
</dbReference>
<dbReference type="PANTHER" id="PTHR47816:SF4">
    <property type="entry name" value="RIBOSOMAL RNA SMALL SUBUNIT METHYLTRANSFERASE C"/>
    <property type="match status" value="1"/>
</dbReference>
<dbReference type="Pfam" id="PF05175">
    <property type="entry name" value="MTS"/>
    <property type="match status" value="1"/>
</dbReference>
<dbReference type="Pfam" id="PF08468">
    <property type="entry name" value="MTS_N"/>
    <property type="match status" value="1"/>
</dbReference>
<dbReference type="PRINTS" id="PR00507">
    <property type="entry name" value="N12N6MTFRASE"/>
</dbReference>
<dbReference type="SUPFAM" id="SSF53335">
    <property type="entry name" value="S-adenosyl-L-methionine-dependent methyltransferases"/>
    <property type="match status" value="1"/>
</dbReference>
<feature type="chain" id="PRO_0000369750" description="Ribosomal RNA small subunit methyltransferase C">
    <location>
        <begin position="1"/>
        <end position="349"/>
    </location>
</feature>
<gene>
    <name evidence="1" type="primary">rsmC</name>
    <name type="ordered locus">Ping_3032</name>
</gene>
<evidence type="ECO:0000255" key="1">
    <source>
        <dbReference type="HAMAP-Rule" id="MF_01862"/>
    </source>
</evidence>
<name>RSMC_PSYIN</name>